<organism>
    <name type="scientific">Hyperthermus butylicus (strain DSM 5456 / JCM 9403 / PLM1-5)</name>
    <dbReference type="NCBI Taxonomy" id="415426"/>
    <lineage>
        <taxon>Archaea</taxon>
        <taxon>Thermoproteota</taxon>
        <taxon>Thermoprotei</taxon>
        <taxon>Desulfurococcales</taxon>
        <taxon>Pyrodictiaceae</taxon>
        <taxon>Hyperthermus</taxon>
    </lineage>
</organism>
<proteinExistence type="inferred from homology"/>
<protein>
    <recommendedName>
        <fullName evidence="1">Small ribosomal subunit protein uS10</fullName>
    </recommendedName>
    <alternativeName>
        <fullName evidence="2">30S ribosomal protein S10</fullName>
    </alternativeName>
</protein>
<name>RS10_HYPBU</name>
<accession>A2BN42</accession>
<dbReference type="EMBL" id="CP000493">
    <property type="protein sequence ID" value="ABM81403.1"/>
    <property type="molecule type" value="Genomic_DNA"/>
</dbReference>
<dbReference type="RefSeq" id="WP_011822721.1">
    <property type="nucleotide sequence ID" value="NC_008818.1"/>
</dbReference>
<dbReference type="SMR" id="A2BN42"/>
<dbReference type="STRING" id="415426.Hbut_1582"/>
<dbReference type="EnsemblBacteria" id="ABM81403">
    <property type="protein sequence ID" value="ABM81403"/>
    <property type="gene ID" value="Hbut_1582"/>
</dbReference>
<dbReference type="GeneID" id="4781446"/>
<dbReference type="KEGG" id="hbu:Hbut_1582"/>
<dbReference type="eggNOG" id="arCOG01758">
    <property type="taxonomic scope" value="Archaea"/>
</dbReference>
<dbReference type="HOGENOM" id="CLU_122625_0_1_2"/>
<dbReference type="OrthoDB" id="371736at2157"/>
<dbReference type="Proteomes" id="UP000002593">
    <property type="component" value="Chromosome"/>
</dbReference>
<dbReference type="GO" id="GO:0015935">
    <property type="term" value="C:small ribosomal subunit"/>
    <property type="evidence" value="ECO:0007669"/>
    <property type="project" value="InterPro"/>
</dbReference>
<dbReference type="GO" id="GO:0003735">
    <property type="term" value="F:structural constituent of ribosome"/>
    <property type="evidence" value="ECO:0007669"/>
    <property type="project" value="InterPro"/>
</dbReference>
<dbReference type="GO" id="GO:0000049">
    <property type="term" value="F:tRNA binding"/>
    <property type="evidence" value="ECO:0007669"/>
    <property type="project" value="UniProtKB-UniRule"/>
</dbReference>
<dbReference type="GO" id="GO:0006412">
    <property type="term" value="P:translation"/>
    <property type="evidence" value="ECO:0007669"/>
    <property type="project" value="UniProtKB-UniRule"/>
</dbReference>
<dbReference type="FunFam" id="3.30.70.600:FF:000004">
    <property type="entry name" value="30S ribosomal protein S10"/>
    <property type="match status" value="1"/>
</dbReference>
<dbReference type="Gene3D" id="3.30.70.600">
    <property type="entry name" value="Ribosomal protein S10 domain"/>
    <property type="match status" value="1"/>
</dbReference>
<dbReference type="HAMAP" id="MF_00508">
    <property type="entry name" value="Ribosomal_uS10"/>
    <property type="match status" value="1"/>
</dbReference>
<dbReference type="InterPro" id="IPR001848">
    <property type="entry name" value="Ribosomal_uS10"/>
</dbReference>
<dbReference type="InterPro" id="IPR018268">
    <property type="entry name" value="Ribosomal_uS10_CS"/>
</dbReference>
<dbReference type="InterPro" id="IPR027486">
    <property type="entry name" value="Ribosomal_uS10_dom"/>
</dbReference>
<dbReference type="InterPro" id="IPR036838">
    <property type="entry name" value="Ribosomal_uS10_dom_sf"/>
</dbReference>
<dbReference type="InterPro" id="IPR005729">
    <property type="entry name" value="Ribosomal_uS10_euk/arc"/>
</dbReference>
<dbReference type="NCBIfam" id="TIGR01046">
    <property type="entry name" value="uS10_euk_arch"/>
    <property type="match status" value="1"/>
</dbReference>
<dbReference type="PANTHER" id="PTHR11700">
    <property type="entry name" value="30S RIBOSOMAL PROTEIN S10 FAMILY MEMBER"/>
    <property type="match status" value="1"/>
</dbReference>
<dbReference type="Pfam" id="PF00338">
    <property type="entry name" value="Ribosomal_S10"/>
    <property type="match status" value="1"/>
</dbReference>
<dbReference type="PRINTS" id="PR00971">
    <property type="entry name" value="RIBOSOMALS10"/>
</dbReference>
<dbReference type="SMART" id="SM01403">
    <property type="entry name" value="Ribosomal_S10"/>
    <property type="match status" value="1"/>
</dbReference>
<dbReference type="SUPFAM" id="SSF54999">
    <property type="entry name" value="Ribosomal protein S10"/>
    <property type="match status" value="1"/>
</dbReference>
<dbReference type="PROSITE" id="PS00361">
    <property type="entry name" value="RIBOSOMAL_S10"/>
    <property type="match status" value="1"/>
</dbReference>
<sequence length="102" mass="12025">MVQKAEIKLWSTNVESLNQVVEQIKAIAKKTGVRMRGPIPLPTRRLIVPTLKLPHGEGSKKWDKWELRIHKRLVILDADERVIRQIMRVRVPEDVYIEIRLR</sequence>
<reference key="1">
    <citation type="journal article" date="2007" name="Archaea">
        <title>The genome of Hyperthermus butylicus: a sulfur-reducing, peptide fermenting, neutrophilic Crenarchaeote growing up to 108 degrees C.</title>
        <authorList>
            <person name="Bruegger K."/>
            <person name="Chen L."/>
            <person name="Stark M."/>
            <person name="Zibat A."/>
            <person name="Redder P."/>
            <person name="Ruepp A."/>
            <person name="Awayez M."/>
            <person name="She Q."/>
            <person name="Garrett R.A."/>
            <person name="Klenk H.-P."/>
        </authorList>
    </citation>
    <scope>NUCLEOTIDE SEQUENCE [LARGE SCALE GENOMIC DNA]</scope>
    <source>
        <strain>DSM 5456 / JCM 9403 / PLM1-5</strain>
    </source>
</reference>
<feature type="chain" id="PRO_1000015034" description="Small ribosomal subunit protein uS10">
    <location>
        <begin position="1"/>
        <end position="102"/>
    </location>
</feature>
<gene>
    <name evidence="1" type="primary">rps10</name>
    <name type="ordered locus">Hbut_1582</name>
</gene>
<keyword id="KW-1185">Reference proteome</keyword>
<keyword id="KW-0687">Ribonucleoprotein</keyword>
<keyword id="KW-0689">Ribosomal protein</keyword>
<comment type="function">
    <text evidence="1">Involved in the binding of tRNA to the ribosomes.</text>
</comment>
<comment type="subunit">
    <text evidence="1">Part of the 30S ribosomal subunit.</text>
</comment>
<comment type="similarity">
    <text evidence="1">Belongs to the universal ribosomal protein uS10 family.</text>
</comment>
<evidence type="ECO:0000255" key="1">
    <source>
        <dbReference type="HAMAP-Rule" id="MF_00508"/>
    </source>
</evidence>
<evidence type="ECO:0000305" key="2"/>